<name>Y3249_CITK8</name>
<gene>
    <name type="ordered locus">CKO_03249</name>
</gene>
<accession>A8ALH0</accession>
<sequence>MDYEFLRDITGVVKVRMSMGHEVVGHWFNEEVKENLALLDEVEQAARALKGSERSWQRAGHEYTLWMDGEEVMVRANQLEFTGDEMEEGMNYYDEESLSLCGVEDFLQVVAAYRHFIQQR</sequence>
<reference key="1">
    <citation type="submission" date="2007-08" db="EMBL/GenBank/DDBJ databases">
        <authorList>
            <consortium name="The Citrobacter koseri Genome Sequencing Project"/>
            <person name="McClelland M."/>
            <person name="Sanderson E.K."/>
            <person name="Porwollik S."/>
            <person name="Spieth J."/>
            <person name="Clifton W.S."/>
            <person name="Latreille P."/>
            <person name="Courtney L."/>
            <person name="Wang C."/>
            <person name="Pepin K."/>
            <person name="Bhonagiri V."/>
            <person name="Nash W."/>
            <person name="Johnson M."/>
            <person name="Thiruvilangam P."/>
            <person name="Wilson R."/>
        </authorList>
    </citation>
    <scope>NUCLEOTIDE SEQUENCE [LARGE SCALE GENOMIC DNA]</scope>
    <source>
        <strain>ATCC BAA-895 / CDC 4225-83 / SGSC4696</strain>
    </source>
</reference>
<feature type="chain" id="PRO_1000064356" description="UPF0231 protein CKO_03249">
    <location>
        <begin position="1"/>
        <end position="120"/>
    </location>
</feature>
<organism>
    <name type="scientific">Citrobacter koseri (strain ATCC BAA-895 / CDC 4225-83 / SGSC4696)</name>
    <dbReference type="NCBI Taxonomy" id="290338"/>
    <lineage>
        <taxon>Bacteria</taxon>
        <taxon>Pseudomonadati</taxon>
        <taxon>Pseudomonadota</taxon>
        <taxon>Gammaproteobacteria</taxon>
        <taxon>Enterobacterales</taxon>
        <taxon>Enterobacteriaceae</taxon>
        <taxon>Citrobacter</taxon>
    </lineage>
</organism>
<protein>
    <recommendedName>
        <fullName evidence="1">UPF0231 protein CKO_03249</fullName>
    </recommendedName>
</protein>
<comment type="similarity">
    <text evidence="1">Belongs to the UPF0231 family.</text>
</comment>
<evidence type="ECO:0000255" key="1">
    <source>
        <dbReference type="HAMAP-Rule" id="MF_01053"/>
    </source>
</evidence>
<proteinExistence type="inferred from homology"/>
<keyword id="KW-1185">Reference proteome</keyword>
<dbReference type="EMBL" id="CP000822">
    <property type="protein sequence ID" value="ABV14333.1"/>
    <property type="molecule type" value="Genomic_DNA"/>
</dbReference>
<dbReference type="STRING" id="290338.CKO_03249"/>
<dbReference type="GeneID" id="45137028"/>
<dbReference type="KEGG" id="cko:CKO_03249"/>
<dbReference type="HOGENOM" id="CLU_139226_0_0_6"/>
<dbReference type="OrthoDB" id="5739292at2"/>
<dbReference type="Proteomes" id="UP000008148">
    <property type="component" value="Chromosome"/>
</dbReference>
<dbReference type="HAMAP" id="MF_01053">
    <property type="entry name" value="UPF0231"/>
    <property type="match status" value="1"/>
</dbReference>
<dbReference type="InterPro" id="IPR008249">
    <property type="entry name" value="UPF0231"/>
</dbReference>
<dbReference type="NCBIfam" id="NF003574">
    <property type="entry name" value="PRK05248.1-1"/>
    <property type="match status" value="1"/>
</dbReference>
<dbReference type="NCBIfam" id="NF003576">
    <property type="entry name" value="PRK05248.1-3"/>
    <property type="match status" value="1"/>
</dbReference>
<dbReference type="Pfam" id="PF06062">
    <property type="entry name" value="UPF0231"/>
    <property type="match status" value="1"/>
</dbReference>
<dbReference type="PIRSF" id="PIRSF006287">
    <property type="entry name" value="UCP006287"/>
    <property type="match status" value="1"/>
</dbReference>